<accession>B5E677</accession>
<feature type="chain" id="PRO_1000184512" description="ATP synthase subunit c">
    <location>
        <begin position="1"/>
        <end position="66"/>
    </location>
</feature>
<feature type="transmembrane region" description="Helical" evidence="1">
    <location>
        <begin position="3"/>
        <end position="23"/>
    </location>
</feature>
<feature type="transmembrane region" description="Helical" evidence="1">
    <location>
        <begin position="45"/>
        <end position="65"/>
    </location>
</feature>
<feature type="site" description="Reversibly protonated during proton transport" evidence="1">
    <location>
        <position position="52"/>
    </location>
</feature>
<comment type="function">
    <text evidence="1">F(1)F(0) ATP synthase produces ATP from ADP in the presence of a proton or sodium gradient. F-type ATPases consist of two structural domains, F(1) containing the extramembraneous catalytic core and F(0) containing the membrane proton channel, linked together by a central stalk and a peripheral stalk. During catalysis, ATP synthesis in the catalytic domain of F(1) is coupled via a rotary mechanism of the central stalk subunits to proton translocation.</text>
</comment>
<comment type="function">
    <text evidence="1">Key component of the F(0) channel; it plays a direct role in translocation across the membrane. A homomeric c-ring of between 10-14 subunits forms the central stalk rotor element with the F(1) delta and epsilon subunits.</text>
</comment>
<comment type="subunit">
    <text evidence="1">F-type ATPases have 2 components, F(1) - the catalytic core - and F(0) - the membrane proton channel. F(1) has five subunits: alpha(3), beta(3), gamma(1), delta(1), epsilon(1). F(0) has three main subunits: a(1), b(2) and c(10-14). The alpha and beta chains form an alternating ring which encloses part of the gamma chain. F(1) is attached to F(0) by a central stalk formed by the gamma and epsilon chains, while a peripheral stalk is formed by the delta and b chains.</text>
</comment>
<comment type="subcellular location">
    <subcellularLocation>
        <location evidence="1">Cell membrane</location>
        <topology evidence="1">Multi-pass membrane protein</topology>
    </subcellularLocation>
</comment>
<comment type="similarity">
    <text evidence="1">Belongs to the ATPase C chain family.</text>
</comment>
<gene>
    <name evidence="1" type="primary">atpE</name>
    <name type="ordered locus">SPG_1437</name>
</gene>
<protein>
    <recommendedName>
        <fullName evidence="1">ATP synthase subunit c</fullName>
    </recommendedName>
    <alternativeName>
        <fullName evidence="1">ATP synthase F(0) sector subunit c</fullName>
    </alternativeName>
    <alternativeName>
        <fullName evidence="1">F-type ATPase subunit c</fullName>
        <shortName evidence="1">F-ATPase subunit c</shortName>
    </alternativeName>
    <alternativeName>
        <fullName evidence="1">Lipid-binding protein</fullName>
    </alternativeName>
</protein>
<dbReference type="EMBL" id="CP001015">
    <property type="protein sequence ID" value="ACF56071.1"/>
    <property type="molecule type" value="Genomic_DNA"/>
</dbReference>
<dbReference type="SMR" id="B5E677"/>
<dbReference type="KEGG" id="spx:SPG_1437"/>
<dbReference type="HOGENOM" id="CLU_148047_5_2_9"/>
<dbReference type="GO" id="GO:0005886">
    <property type="term" value="C:plasma membrane"/>
    <property type="evidence" value="ECO:0007669"/>
    <property type="project" value="UniProtKB-SubCell"/>
</dbReference>
<dbReference type="GO" id="GO:0045259">
    <property type="term" value="C:proton-transporting ATP synthase complex"/>
    <property type="evidence" value="ECO:0007669"/>
    <property type="project" value="UniProtKB-KW"/>
</dbReference>
<dbReference type="GO" id="GO:0033177">
    <property type="term" value="C:proton-transporting two-sector ATPase complex, proton-transporting domain"/>
    <property type="evidence" value="ECO:0007669"/>
    <property type="project" value="InterPro"/>
</dbReference>
<dbReference type="GO" id="GO:0008289">
    <property type="term" value="F:lipid binding"/>
    <property type="evidence" value="ECO:0007669"/>
    <property type="project" value="UniProtKB-KW"/>
</dbReference>
<dbReference type="GO" id="GO:0046933">
    <property type="term" value="F:proton-transporting ATP synthase activity, rotational mechanism"/>
    <property type="evidence" value="ECO:0007669"/>
    <property type="project" value="UniProtKB-UniRule"/>
</dbReference>
<dbReference type="CDD" id="cd18121">
    <property type="entry name" value="ATP-synt_Fo_c"/>
    <property type="match status" value="1"/>
</dbReference>
<dbReference type="FunFam" id="1.20.20.10:FF:000017">
    <property type="entry name" value="ATP synthase subunit c"/>
    <property type="match status" value="1"/>
</dbReference>
<dbReference type="Gene3D" id="1.20.20.10">
    <property type="entry name" value="F1F0 ATP synthase subunit C"/>
    <property type="match status" value="1"/>
</dbReference>
<dbReference type="HAMAP" id="MF_01396">
    <property type="entry name" value="ATP_synth_c_bact"/>
    <property type="match status" value="1"/>
</dbReference>
<dbReference type="InterPro" id="IPR000454">
    <property type="entry name" value="ATP_synth_F0_csu"/>
</dbReference>
<dbReference type="InterPro" id="IPR020537">
    <property type="entry name" value="ATP_synth_F0_csu_DDCD_BS"/>
</dbReference>
<dbReference type="InterPro" id="IPR038662">
    <property type="entry name" value="ATP_synth_F0_csu_sf"/>
</dbReference>
<dbReference type="InterPro" id="IPR002379">
    <property type="entry name" value="ATPase_proteolipid_c-like_dom"/>
</dbReference>
<dbReference type="InterPro" id="IPR035921">
    <property type="entry name" value="F/V-ATP_Csub_sf"/>
</dbReference>
<dbReference type="NCBIfam" id="NF009997">
    <property type="entry name" value="PRK13467.1"/>
    <property type="match status" value="1"/>
</dbReference>
<dbReference type="Pfam" id="PF00137">
    <property type="entry name" value="ATP-synt_C"/>
    <property type="match status" value="1"/>
</dbReference>
<dbReference type="PRINTS" id="PR00124">
    <property type="entry name" value="ATPASEC"/>
</dbReference>
<dbReference type="SUPFAM" id="SSF81333">
    <property type="entry name" value="F1F0 ATP synthase subunit C"/>
    <property type="match status" value="1"/>
</dbReference>
<dbReference type="PROSITE" id="PS00605">
    <property type="entry name" value="ATPASE_C"/>
    <property type="match status" value="1"/>
</dbReference>
<sequence length="66" mass="7260">MNLTFLGLCIACMGVSVGEGLLMNGLFKSVARQPDMLSEFRSLMFLGVAFIEGTFFVTLVFSFIIK</sequence>
<keyword id="KW-0066">ATP synthesis</keyword>
<keyword id="KW-1003">Cell membrane</keyword>
<keyword id="KW-0138">CF(0)</keyword>
<keyword id="KW-0375">Hydrogen ion transport</keyword>
<keyword id="KW-0406">Ion transport</keyword>
<keyword id="KW-0446">Lipid-binding</keyword>
<keyword id="KW-0472">Membrane</keyword>
<keyword id="KW-0812">Transmembrane</keyword>
<keyword id="KW-1133">Transmembrane helix</keyword>
<keyword id="KW-0813">Transport</keyword>
<evidence type="ECO:0000255" key="1">
    <source>
        <dbReference type="HAMAP-Rule" id="MF_01396"/>
    </source>
</evidence>
<organism>
    <name type="scientific">Streptococcus pneumoniae serotype 19F (strain G54)</name>
    <dbReference type="NCBI Taxonomy" id="512566"/>
    <lineage>
        <taxon>Bacteria</taxon>
        <taxon>Bacillati</taxon>
        <taxon>Bacillota</taxon>
        <taxon>Bacilli</taxon>
        <taxon>Lactobacillales</taxon>
        <taxon>Streptococcaceae</taxon>
        <taxon>Streptococcus</taxon>
    </lineage>
</organism>
<reference key="1">
    <citation type="journal article" date="2001" name="Microb. Drug Resist.">
        <title>Annotated draft genomic sequence from a Streptococcus pneumoniae type 19F clinical isolate.</title>
        <authorList>
            <person name="Dopazo J."/>
            <person name="Mendoza A."/>
            <person name="Herrero J."/>
            <person name="Caldara F."/>
            <person name="Humbert Y."/>
            <person name="Friedli L."/>
            <person name="Guerrier M."/>
            <person name="Grand-Schenk E."/>
            <person name="Gandin C."/>
            <person name="de Francesco M."/>
            <person name="Polissi A."/>
            <person name="Buell G."/>
            <person name="Feger G."/>
            <person name="Garcia E."/>
            <person name="Peitsch M."/>
            <person name="Garcia-Bustos J.F."/>
        </authorList>
    </citation>
    <scope>NUCLEOTIDE SEQUENCE [LARGE SCALE GENOMIC DNA]</scope>
    <source>
        <strain>G54</strain>
    </source>
</reference>
<reference key="2">
    <citation type="submission" date="2008-03" db="EMBL/GenBank/DDBJ databases">
        <title>Pneumococcal beta glucoside metabolism investigated by whole genome comparison.</title>
        <authorList>
            <person name="Mulas L."/>
            <person name="Trappetti C."/>
            <person name="Hakenbeck R."/>
            <person name="Iannelli F."/>
            <person name="Pozzi G."/>
            <person name="Davidsen T.M."/>
            <person name="Tettelin H."/>
            <person name="Oggioni M."/>
        </authorList>
    </citation>
    <scope>NUCLEOTIDE SEQUENCE [LARGE SCALE GENOMIC DNA]</scope>
    <source>
        <strain>G54</strain>
    </source>
</reference>
<name>ATPL_STRP4</name>
<proteinExistence type="inferred from homology"/>